<evidence type="ECO:0000255" key="1">
    <source>
        <dbReference type="HAMAP-Rule" id="MF_01855"/>
    </source>
</evidence>
<feature type="chain" id="PRO_0000364598" description="Fructose-1,6-bisphosphatase class 1 3">
    <location>
        <begin position="1"/>
        <end position="357"/>
    </location>
</feature>
<feature type="binding site" evidence="1">
    <location>
        <position position="94"/>
    </location>
    <ligand>
        <name>Mg(2+)</name>
        <dbReference type="ChEBI" id="CHEBI:18420"/>
        <label>1</label>
    </ligand>
</feature>
<feature type="binding site" evidence="1">
    <location>
        <position position="116"/>
    </location>
    <ligand>
        <name>Mg(2+)</name>
        <dbReference type="ChEBI" id="CHEBI:18420"/>
        <label>1</label>
    </ligand>
</feature>
<feature type="binding site" evidence="1">
    <location>
        <position position="116"/>
    </location>
    <ligand>
        <name>Mg(2+)</name>
        <dbReference type="ChEBI" id="CHEBI:18420"/>
        <label>2</label>
    </ligand>
</feature>
<feature type="binding site" evidence="1">
    <location>
        <position position="118"/>
    </location>
    <ligand>
        <name>Mg(2+)</name>
        <dbReference type="ChEBI" id="CHEBI:18420"/>
        <label>1</label>
    </ligand>
</feature>
<feature type="binding site" evidence="1">
    <location>
        <begin position="119"/>
        <end position="122"/>
    </location>
    <ligand>
        <name>substrate</name>
    </ligand>
</feature>
<feature type="binding site" evidence="1">
    <location>
        <position position="119"/>
    </location>
    <ligand>
        <name>Mg(2+)</name>
        <dbReference type="ChEBI" id="CHEBI:18420"/>
        <label>2</label>
    </ligand>
</feature>
<feature type="binding site" evidence="1">
    <location>
        <position position="211"/>
    </location>
    <ligand>
        <name>substrate</name>
    </ligand>
</feature>
<feature type="binding site" evidence="1">
    <location>
        <position position="283"/>
    </location>
    <ligand>
        <name>Mg(2+)</name>
        <dbReference type="ChEBI" id="CHEBI:18420"/>
        <label>2</label>
    </ligand>
</feature>
<proteinExistence type="inferred from homology"/>
<dbReference type="EC" id="3.1.3.11" evidence="1"/>
<dbReference type="EMBL" id="CP000555">
    <property type="protein sequence ID" value="ABM95742.1"/>
    <property type="molecule type" value="Genomic_DNA"/>
</dbReference>
<dbReference type="RefSeq" id="WP_011830371.1">
    <property type="nucleotide sequence ID" value="NC_008825.1"/>
</dbReference>
<dbReference type="SMR" id="A2SJK3"/>
<dbReference type="STRING" id="420662.Mpe_A2788"/>
<dbReference type="KEGG" id="mpt:Mpe_A2788"/>
<dbReference type="eggNOG" id="COG0158">
    <property type="taxonomic scope" value="Bacteria"/>
</dbReference>
<dbReference type="HOGENOM" id="CLU_039977_2_2_4"/>
<dbReference type="UniPathway" id="UPA00116"/>
<dbReference type="Proteomes" id="UP000000366">
    <property type="component" value="Chromosome"/>
</dbReference>
<dbReference type="GO" id="GO:0005829">
    <property type="term" value="C:cytosol"/>
    <property type="evidence" value="ECO:0007669"/>
    <property type="project" value="TreeGrafter"/>
</dbReference>
<dbReference type="GO" id="GO:0042132">
    <property type="term" value="F:fructose 1,6-bisphosphate 1-phosphatase activity"/>
    <property type="evidence" value="ECO:0007669"/>
    <property type="project" value="UniProtKB-UniRule"/>
</dbReference>
<dbReference type="GO" id="GO:0000287">
    <property type="term" value="F:magnesium ion binding"/>
    <property type="evidence" value="ECO:0007669"/>
    <property type="project" value="UniProtKB-UniRule"/>
</dbReference>
<dbReference type="GO" id="GO:0030388">
    <property type="term" value="P:fructose 1,6-bisphosphate metabolic process"/>
    <property type="evidence" value="ECO:0007669"/>
    <property type="project" value="TreeGrafter"/>
</dbReference>
<dbReference type="GO" id="GO:0006002">
    <property type="term" value="P:fructose 6-phosphate metabolic process"/>
    <property type="evidence" value="ECO:0007669"/>
    <property type="project" value="TreeGrafter"/>
</dbReference>
<dbReference type="GO" id="GO:0006000">
    <property type="term" value="P:fructose metabolic process"/>
    <property type="evidence" value="ECO:0007669"/>
    <property type="project" value="TreeGrafter"/>
</dbReference>
<dbReference type="GO" id="GO:0006094">
    <property type="term" value="P:gluconeogenesis"/>
    <property type="evidence" value="ECO:0007669"/>
    <property type="project" value="UniProtKB-UniRule"/>
</dbReference>
<dbReference type="GO" id="GO:0019253">
    <property type="term" value="P:reductive pentose-phosphate cycle"/>
    <property type="evidence" value="ECO:0007669"/>
    <property type="project" value="UniProtKB-UniRule"/>
</dbReference>
<dbReference type="GO" id="GO:0005986">
    <property type="term" value="P:sucrose biosynthetic process"/>
    <property type="evidence" value="ECO:0007669"/>
    <property type="project" value="TreeGrafter"/>
</dbReference>
<dbReference type="CDD" id="cd00354">
    <property type="entry name" value="FBPase"/>
    <property type="match status" value="1"/>
</dbReference>
<dbReference type="FunFam" id="3.30.540.10:FF:000002">
    <property type="entry name" value="Fructose-1,6-bisphosphatase class 1"/>
    <property type="match status" value="1"/>
</dbReference>
<dbReference type="FunFam" id="3.40.190.80:FF:000011">
    <property type="entry name" value="Fructose-1,6-bisphosphatase class 1"/>
    <property type="match status" value="1"/>
</dbReference>
<dbReference type="Gene3D" id="3.40.190.80">
    <property type="match status" value="1"/>
</dbReference>
<dbReference type="Gene3D" id="3.30.540.10">
    <property type="entry name" value="Fructose-1,6-Bisphosphatase, subunit A, domain 1"/>
    <property type="match status" value="1"/>
</dbReference>
<dbReference type="HAMAP" id="MF_01855">
    <property type="entry name" value="FBPase_class1"/>
    <property type="match status" value="1"/>
</dbReference>
<dbReference type="InterPro" id="IPR044015">
    <property type="entry name" value="FBPase_C_dom"/>
</dbReference>
<dbReference type="InterPro" id="IPR000146">
    <property type="entry name" value="FBPase_class-1"/>
</dbReference>
<dbReference type="InterPro" id="IPR033391">
    <property type="entry name" value="FBPase_N"/>
</dbReference>
<dbReference type="InterPro" id="IPR028343">
    <property type="entry name" value="FBPtase"/>
</dbReference>
<dbReference type="InterPro" id="IPR020548">
    <property type="entry name" value="Fructose_bisphosphatase_AS"/>
</dbReference>
<dbReference type="NCBIfam" id="NF006778">
    <property type="entry name" value="PRK09293.1-1"/>
    <property type="match status" value="1"/>
</dbReference>
<dbReference type="NCBIfam" id="NF006779">
    <property type="entry name" value="PRK09293.1-3"/>
    <property type="match status" value="1"/>
</dbReference>
<dbReference type="NCBIfam" id="NF006780">
    <property type="entry name" value="PRK09293.1-4"/>
    <property type="match status" value="1"/>
</dbReference>
<dbReference type="PANTHER" id="PTHR11556">
    <property type="entry name" value="FRUCTOSE-1,6-BISPHOSPHATASE-RELATED"/>
    <property type="match status" value="1"/>
</dbReference>
<dbReference type="PANTHER" id="PTHR11556:SF35">
    <property type="entry name" value="SEDOHEPTULOSE-1,7-BISPHOSPHATASE, CHLOROPLASTIC"/>
    <property type="match status" value="1"/>
</dbReference>
<dbReference type="Pfam" id="PF00316">
    <property type="entry name" value="FBPase"/>
    <property type="match status" value="1"/>
</dbReference>
<dbReference type="Pfam" id="PF18913">
    <property type="entry name" value="FBPase_C"/>
    <property type="match status" value="1"/>
</dbReference>
<dbReference type="PIRSF" id="PIRSF500210">
    <property type="entry name" value="FBPtase"/>
    <property type="match status" value="1"/>
</dbReference>
<dbReference type="PIRSF" id="PIRSF000904">
    <property type="entry name" value="FBPtase_SBPase"/>
    <property type="match status" value="1"/>
</dbReference>
<dbReference type="PRINTS" id="PR00115">
    <property type="entry name" value="F16BPHPHTASE"/>
</dbReference>
<dbReference type="SUPFAM" id="SSF56655">
    <property type="entry name" value="Carbohydrate phosphatase"/>
    <property type="match status" value="1"/>
</dbReference>
<dbReference type="PROSITE" id="PS00124">
    <property type="entry name" value="FBPASE"/>
    <property type="match status" value="1"/>
</dbReference>
<organism>
    <name type="scientific">Methylibium petroleiphilum (strain ATCC BAA-1232 / LMG 22953 / PM1)</name>
    <dbReference type="NCBI Taxonomy" id="420662"/>
    <lineage>
        <taxon>Bacteria</taxon>
        <taxon>Pseudomonadati</taxon>
        <taxon>Pseudomonadota</taxon>
        <taxon>Betaproteobacteria</taxon>
        <taxon>Burkholderiales</taxon>
        <taxon>Sphaerotilaceae</taxon>
        <taxon>Methylibium</taxon>
    </lineage>
</organism>
<keyword id="KW-0113">Calvin cycle</keyword>
<keyword id="KW-0119">Carbohydrate metabolism</keyword>
<keyword id="KW-0963">Cytoplasm</keyword>
<keyword id="KW-0378">Hydrolase</keyword>
<keyword id="KW-0460">Magnesium</keyword>
<keyword id="KW-0479">Metal-binding</keyword>
<keyword id="KW-1185">Reference proteome</keyword>
<reference key="1">
    <citation type="journal article" date="2007" name="J. Bacteriol.">
        <title>Whole-genome analysis of the methyl tert-butyl ether-degrading beta-proteobacterium Methylibium petroleiphilum PM1.</title>
        <authorList>
            <person name="Kane S.R."/>
            <person name="Chakicherla A.Y."/>
            <person name="Chain P.S.G."/>
            <person name="Schmidt R."/>
            <person name="Shin M.W."/>
            <person name="Legler T.C."/>
            <person name="Scow K.M."/>
            <person name="Larimer F.W."/>
            <person name="Lucas S.M."/>
            <person name="Richardson P.M."/>
            <person name="Hristova K.R."/>
        </authorList>
    </citation>
    <scope>NUCLEOTIDE SEQUENCE [LARGE SCALE GENOMIC DNA]</scope>
    <source>
        <strain>ATCC BAA-1232 / LMG 22953 / PM1</strain>
    </source>
</reference>
<comment type="catalytic activity">
    <reaction evidence="1">
        <text>beta-D-fructose 1,6-bisphosphate + H2O = beta-D-fructose 6-phosphate + phosphate</text>
        <dbReference type="Rhea" id="RHEA:11064"/>
        <dbReference type="ChEBI" id="CHEBI:15377"/>
        <dbReference type="ChEBI" id="CHEBI:32966"/>
        <dbReference type="ChEBI" id="CHEBI:43474"/>
        <dbReference type="ChEBI" id="CHEBI:57634"/>
        <dbReference type="EC" id="3.1.3.11"/>
    </reaction>
</comment>
<comment type="cofactor">
    <cofactor evidence="1">
        <name>Mg(2+)</name>
        <dbReference type="ChEBI" id="CHEBI:18420"/>
    </cofactor>
    <text evidence="1">Binds 2 magnesium ions per subunit.</text>
</comment>
<comment type="pathway">
    <text evidence="1">Carbohydrate biosynthesis; Calvin cycle.</text>
</comment>
<comment type="subunit">
    <text evidence="1">Homotetramer.</text>
</comment>
<comment type="subcellular location">
    <subcellularLocation>
        <location evidence="1">Cytoplasm</location>
    </subcellularLocation>
</comment>
<comment type="similarity">
    <text evidence="1">Belongs to the FBPase class 1 family.</text>
</comment>
<gene>
    <name evidence="1" type="primary">fbp3</name>
    <name type="ordered locus">Mpe_A2788</name>
</gene>
<sequence>MPTGGKSTLTQFLIEERRKHPAATGELNALITDVSLACKAISRKVAFGGLAGVLGSAGSGNVQGEEQKTLDVLSNTMFLRATEWGGHVAGMVSEELEAPYTLPPQYARGKYLLMFDPLDGSSNIDVNVTVGSIFAIHRAPQPRQDPQPQDYLQPGTTMVCGGYAIYGPSTMLVLTLGDGTHAFTLDPQLGEWVLSHPNLRIPEKTREFAINASNSRFWEPAVKRYVDECLAGSTGPRGTDFNMRWIASLVAETHRILMRGGVFLYPRDSKDPNKAGRLRLLYEANPISFLIEQAGGMASTGRKRLLEVQPEDIHQRIGFVFGSTEEVARIEAYHRDEPPTPYNSPLFGKRGLFAEAG</sequence>
<protein>
    <recommendedName>
        <fullName evidence="1">Fructose-1,6-bisphosphatase class 1 3</fullName>
        <shortName evidence="1">FBPase class 1 3</shortName>
        <ecNumber evidence="1">3.1.3.11</ecNumber>
    </recommendedName>
    <alternativeName>
        <fullName evidence="1">D-fructose-1,6-bisphosphate 1-phosphohydrolase class 1 3</fullName>
    </alternativeName>
</protein>
<accession>A2SJK3</accession>
<name>F16A3_METPP</name>